<sequence>MNPISTLTLASLIILTLPITTTLLQNNKTNCFLYITKTAVTYAFVISLIPTLLFVQSNQEAYISNWHWMTIHTLKLSLSFKLDFFSLTFMPIALFITWSIMEFSLWYMHSDPHINRFFKYLLLFLITMLILVSANNLLQLFMGWEGVGIMSFLLISWWHGRTDANTAALQAMLYNRIGDMGFIMMMAWFIIHLNSWEFQQIFLTNPKNTTLPLLGLLLASTGKSAQFGLHPWLPSAMEGPTPVSALLHSSTMVMAGVFTLIRFYPLMENNLTVQTSTLCLGAITTLFTAICALTQNDIKKIIALSTSSQLGLMMVTIGINQPHLAFTHMCTHAFFKAMLFLSSGSIIHNLDNEQDIRKMGGLYKTMPITSTAIIIGSLALTGMPFLTGFYSKDPIIETANMSYINTWALLVTLIAVSMTASYSTRIIFFALLGQPRYPTLTRINENNPHLVNPIKRLILGSIFMGFFISMNTIPHTTPQMTMPPHLKFMALAVTLLGFTVATELNNMTHNLMFKQPSRMYTFSTTLGYYPTTTHRILPYLSLTMSQNLATTIMDSIWLEKMIPKNLTTMQKTAASLVSNQKGLMKLYFLSFLLSITLGLLIAL</sequence>
<comment type="function">
    <text evidence="1">Core subunit of the mitochondrial membrane respiratory chain NADH dehydrogenase (Complex I) which catalyzes electron transfer from NADH through the respiratory chain, using ubiquinone as an electron acceptor. Essential for the catalytic activity and assembly of complex I.</text>
</comment>
<comment type="catalytic activity">
    <reaction evidence="1">
        <text>a ubiquinone + NADH + 5 H(+)(in) = a ubiquinol + NAD(+) + 4 H(+)(out)</text>
        <dbReference type="Rhea" id="RHEA:29091"/>
        <dbReference type="Rhea" id="RHEA-COMP:9565"/>
        <dbReference type="Rhea" id="RHEA-COMP:9566"/>
        <dbReference type="ChEBI" id="CHEBI:15378"/>
        <dbReference type="ChEBI" id="CHEBI:16389"/>
        <dbReference type="ChEBI" id="CHEBI:17976"/>
        <dbReference type="ChEBI" id="CHEBI:57540"/>
        <dbReference type="ChEBI" id="CHEBI:57945"/>
        <dbReference type="EC" id="7.1.1.2"/>
    </reaction>
</comment>
<comment type="subunit">
    <text evidence="2">Core subunit of respiratory chain NADH dehydrogenase (Complex I) which is composed of 45 different subunits.</text>
</comment>
<comment type="subcellular location">
    <subcellularLocation>
        <location evidence="2">Mitochondrion inner membrane</location>
        <topology evidence="3">Multi-pass membrane protein</topology>
    </subcellularLocation>
</comment>
<comment type="similarity">
    <text evidence="4">Belongs to the complex I subunit 5 family.</text>
</comment>
<reference key="1">
    <citation type="journal article" date="2006" name="Nature">
        <title>Multiplex amplification of the mammoth mitochondrial genome and the evolution of Elephantidae.</title>
        <authorList>
            <person name="Krause J."/>
            <person name="Dear P.H."/>
            <person name="Pollack J.L."/>
            <person name="Slatkin M."/>
            <person name="Spriggs H."/>
            <person name="Barnes I."/>
            <person name="Lister A.M."/>
            <person name="Ebersberger I."/>
            <person name="Paeaebo S."/>
            <person name="Hofreiter M."/>
        </authorList>
    </citation>
    <scope>NUCLEOTIDE SEQUENCE [GENOMIC DNA]</scope>
</reference>
<reference key="2">
    <citation type="submission" date="2006-11" db="EMBL/GenBank/DDBJ databases">
        <authorList>
            <person name="Krause J."/>
            <person name="Dear P.H."/>
            <person name="Pollack J.L."/>
            <person name="Slatkin M."/>
            <person name="Spriggs H."/>
            <person name="Barnes I."/>
            <person name="Lister A.M."/>
            <person name="Paabo S."/>
            <person name="Hofreiter M."/>
        </authorList>
    </citation>
    <scope>SEQUENCE REVISION TO N-TERMINUS</scope>
</reference>
<reference key="3">
    <citation type="journal article" date="2006" name="PLoS Biol.">
        <title>Complete mitochondrial genome and phylogeny of Pleistocene mammoth Mammuthus primigenius.</title>
        <authorList>
            <person name="Rogaev E.I."/>
            <person name="Moliaka Y.K."/>
            <person name="Malyarchuk B.A."/>
            <person name="Kondrashov F.A."/>
            <person name="Derenko M.V."/>
            <person name="Chumakov I."/>
            <person name="Grigorenko A.P."/>
        </authorList>
    </citation>
    <scope>NUCLEOTIDE SEQUENCE [GENOMIC DNA]</scope>
    <source>
        <tissue>Muscle</tissue>
    </source>
</reference>
<protein>
    <recommendedName>
        <fullName>NADH-ubiquinone oxidoreductase chain 5</fullName>
        <ecNumber evidence="1">7.1.1.2</ecNumber>
    </recommendedName>
    <alternativeName>
        <fullName>NADH dehydrogenase subunit 5</fullName>
    </alternativeName>
</protein>
<name>NU5M_MAMPR</name>
<evidence type="ECO:0000250" key="1">
    <source>
        <dbReference type="UniProtKB" id="P03915"/>
    </source>
</evidence>
<evidence type="ECO:0000250" key="2">
    <source>
        <dbReference type="UniProtKB" id="P03920"/>
    </source>
</evidence>
<evidence type="ECO:0000255" key="3"/>
<evidence type="ECO:0000305" key="4"/>
<keyword id="KW-0249">Electron transport</keyword>
<keyword id="KW-0952">Extinct organism protein</keyword>
<keyword id="KW-0472">Membrane</keyword>
<keyword id="KW-0496">Mitochondrion</keyword>
<keyword id="KW-0999">Mitochondrion inner membrane</keyword>
<keyword id="KW-0520">NAD</keyword>
<keyword id="KW-0679">Respiratory chain</keyword>
<keyword id="KW-1278">Translocase</keyword>
<keyword id="KW-0812">Transmembrane</keyword>
<keyword id="KW-1133">Transmembrane helix</keyword>
<keyword id="KW-0813">Transport</keyword>
<keyword id="KW-0830">Ubiquinone</keyword>
<proteinExistence type="inferred from homology"/>
<gene>
    <name type="primary">MT-ND5</name>
    <name type="synonym">MTND5</name>
    <name type="synonym">NADH5</name>
    <name type="synonym">ND5</name>
</gene>
<feature type="chain" id="PRO_0000232855" description="NADH-ubiquinone oxidoreductase chain 5">
    <location>
        <begin position="1"/>
        <end position="603"/>
    </location>
</feature>
<feature type="transmembrane region" description="Helical" evidence="3">
    <location>
        <begin position="4"/>
        <end position="24"/>
    </location>
</feature>
<feature type="transmembrane region" description="Helical" evidence="3">
    <location>
        <begin position="35"/>
        <end position="55"/>
    </location>
</feature>
<feature type="transmembrane region" description="Helical" evidence="3">
    <location>
        <begin position="84"/>
        <end position="104"/>
    </location>
</feature>
<feature type="transmembrane region" description="Helical" evidence="3">
    <location>
        <begin position="121"/>
        <end position="141"/>
    </location>
</feature>
<feature type="transmembrane region" description="Helical" evidence="3">
    <location>
        <begin position="177"/>
        <end position="197"/>
    </location>
</feature>
<feature type="transmembrane region" description="Helical" evidence="3">
    <location>
        <begin position="213"/>
        <end position="233"/>
    </location>
</feature>
<feature type="transmembrane region" description="Helical" evidence="3">
    <location>
        <begin position="241"/>
        <end position="261"/>
    </location>
</feature>
<feature type="transmembrane region" description="Helical" evidence="3">
    <location>
        <begin position="273"/>
        <end position="293"/>
    </location>
</feature>
<feature type="transmembrane region" description="Helical" evidence="3">
    <location>
        <begin position="301"/>
        <end position="320"/>
    </location>
</feature>
<feature type="transmembrane region" description="Helical" evidence="3">
    <location>
        <begin position="325"/>
        <end position="347"/>
    </location>
</feature>
<feature type="transmembrane region" description="Helical" evidence="3">
    <location>
        <begin position="366"/>
        <end position="386"/>
    </location>
</feature>
<feature type="transmembrane region" description="Helical" evidence="3">
    <location>
        <begin position="413"/>
        <end position="433"/>
    </location>
</feature>
<feature type="transmembrane region" description="Helical" evidence="3">
    <location>
        <begin position="457"/>
        <end position="477"/>
    </location>
</feature>
<feature type="transmembrane region" description="Helical" evidence="3">
    <location>
        <begin position="480"/>
        <end position="500"/>
    </location>
</feature>
<feature type="transmembrane region" description="Helical" evidence="3">
    <location>
        <begin position="583"/>
        <end position="603"/>
    </location>
</feature>
<feature type="sequence conflict" description="In Ref. 3; ABC17888." evidence="4" ref="3">
    <original>V</original>
    <variation>I</variation>
    <location>
        <position position="273"/>
    </location>
</feature>
<organism>
    <name type="scientific">Mammuthus primigenius</name>
    <name type="common">Siberian woolly mammoth</name>
    <dbReference type="NCBI Taxonomy" id="37349"/>
    <lineage>
        <taxon>Eukaryota</taxon>
        <taxon>Metazoa</taxon>
        <taxon>Chordata</taxon>
        <taxon>Craniata</taxon>
        <taxon>Vertebrata</taxon>
        <taxon>Euteleostomi</taxon>
        <taxon>Mammalia</taxon>
        <taxon>Eutheria</taxon>
        <taxon>Afrotheria</taxon>
        <taxon>Proboscidea</taxon>
        <taxon>Elephantidae</taxon>
        <taxon>Mammuthus</taxon>
    </lineage>
</organism>
<accession>Q38PR2</accession>
<accession>Q2I3H7</accession>
<dbReference type="EC" id="7.1.1.2" evidence="1"/>
<dbReference type="EMBL" id="DQ188829">
    <property type="protein sequence ID" value="ABA29794.2"/>
    <property type="molecule type" value="Genomic_DNA"/>
</dbReference>
<dbReference type="EMBL" id="DQ316067">
    <property type="protein sequence ID" value="ABC17888.1"/>
    <property type="molecule type" value="Genomic_DNA"/>
</dbReference>
<dbReference type="RefSeq" id="YP_398764.2">
    <property type="nucleotide sequence ID" value="NC_007596.2"/>
</dbReference>
<dbReference type="SMR" id="Q38PR2"/>
<dbReference type="GeneID" id="3773151"/>
<dbReference type="CTD" id="4540"/>
<dbReference type="GO" id="GO:0005743">
    <property type="term" value="C:mitochondrial inner membrane"/>
    <property type="evidence" value="ECO:0000250"/>
    <property type="project" value="UniProtKB"/>
</dbReference>
<dbReference type="GO" id="GO:0008137">
    <property type="term" value="F:NADH dehydrogenase (ubiquinone) activity"/>
    <property type="evidence" value="ECO:0000250"/>
    <property type="project" value="UniProtKB"/>
</dbReference>
<dbReference type="GO" id="GO:0015990">
    <property type="term" value="P:electron transport coupled proton transport"/>
    <property type="evidence" value="ECO:0007669"/>
    <property type="project" value="TreeGrafter"/>
</dbReference>
<dbReference type="GO" id="GO:0006120">
    <property type="term" value="P:mitochondrial electron transport, NADH to ubiquinone"/>
    <property type="evidence" value="ECO:0000250"/>
    <property type="project" value="UniProtKB"/>
</dbReference>
<dbReference type="GO" id="GO:0032981">
    <property type="term" value="P:mitochondrial respiratory chain complex I assembly"/>
    <property type="evidence" value="ECO:0000250"/>
    <property type="project" value="UniProtKB"/>
</dbReference>
<dbReference type="InterPro" id="IPR010934">
    <property type="entry name" value="NADH_DH_su5_C"/>
</dbReference>
<dbReference type="InterPro" id="IPR018393">
    <property type="entry name" value="NADHpl_OxRdtase_5_subgr"/>
</dbReference>
<dbReference type="InterPro" id="IPR001750">
    <property type="entry name" value="ND/Mrp_TM"/>
</dbReference>
<dbReference type="InterPro" id="IPR003945">
    <property type="entry name" value="NU5C-like"/>
</dbReference>
<dbReference type="InterPro" id="IPR001516">
    <property type="entry name" value="Proton_antipo_N"/>
</dbReference>
<dbReference type="NCBIfam" id="TIGR01974">
    <property type="entry name" value="NDH_I_L"/>
    <property type="match status" value="1"/>
</dbReference>
<dbReference type="PANTHER" id="PTHR42829">
    <property type="entry name" value="NADH-UBIQUINONE OXIDOREDUCTASE CHAIN 5"/>
    <property type="match status" value="1"/>
</dbReference>
<dbReference type="PANTHER" id="PTHR42829:SF2">
    <property type="entry name" value="NADH-UBIQUINONE OXIDOREDUCTASE CHAIN 5"/>
    <property type="match status" value="1"/>
</dbReference>
<dbReference type="Pfam" id="PF06455">
    <property type="entry name" value="NADH5_C"/>
    <property type="match status" value="1"/>
</dbReference>
<dbReference type="Pfam" id="PF00361">
    <property type="entry name" value="Proton_antipo_M"/>
    <property type="match status" value="1"/>
</dbReference>
<dbReference type="Pfam" id="PF00662">
    <property type="entry name" value="Proton_antipo_N"/>
    <property type="match status" value="1"/>
</dbReference>
<dbReference type="PRINTS" id="PR01434">
    <property type="entry name" value="NADHDHGNASE5"/>
</dbReference>
<geneLocation type="mitochondrion"/>